<proteinExistence type="evidence at protein level"/>
<comment type="developmental stage">
    <text evidence="1">Preferentially expressed in germinating seedlings.</text>
</comment>
<comment type="caution">
    <text evidence="1">The order of the peptides shown is unknown.</text>
</comment>
<accession>P81164</accession>
<reference evidence="3" key="1">
    <citation type="journal article" date="1999" name="J. Exp. Bot.">
        <title>Identification of developmentally-specific markers in germinating and haustorial stages of Striga hermonthica (Del.) Benth. seedlings.</title>
        <authorList>
            <person name="Stranger A."/>
            <person name="Corbett J.M."/>
            <person name="Dunn M.J."/>
            <person name="Totty N.F."/>
            <person name="Sterling A."/>
            <person name="Bolwell G.P."/>
        </authorList>
    </citation>
    <scope>PROTEIN SEQUENCE</scope>
    <scope>DEVELOPMENTAL STAGE</scope>
    <source>
        <tissue evidence="1">Seedling</tissue>
    </source>
</reference>
<organism>
    <name type="scientific">Striga hermonthica</name>
    <name type="common">Purple witchweed</name>
    <name type="synonym">Buchnera hermonthica</name>
    <dbReference type="NCBI Taxonomy" id="68872"/>
    <lineage>
        <taxon>Eukaryota</taxon>
        <taxon>Viridiplantae</taxon>
        <taxon>Streptophyta</taxon>
        <taxon>Embryophyta</taxon>
        <taxon>Tracheophyta</taxon>
        <taxon>Spermatophyta</taxon>
        <taxon>Magnoliopsida</taxon>
        <taxon>eudicotyledons</taxon>
        <taxon>Gunneridae</taxon>
        <taxon>Pentapetalae</taxon>
        <taxon>asterids</taxon>
        <taxon>lamiids</taxon>
        <taxon>Lamiales</taxon>
        <taxon>Orobanchaceae</taxon>
        <taxon>Buchnereae</taxon>
        <taxon>Striga</taxon>
    </lineage>
</organism>
<feature type="chain" id="PRO_0000238930" description="Nodulin">
    <location>
        <begin position="1" status="less than"/>
        <end position="95" status="greater than"/>
    </location>
</feature>
<feature type="non-consecutive residues" evidence="2">
    <location>
        <begin position="8"/>
        <end position="9"/>
    </location>
</feature>
<feature type="non-consecutive residues" evidence="2">
    <location>
        <begin position="21"/>
        <end position="22"/>
    </location>
</feature>
<feature type="non-consecutive residues" evidence="2">
    <location>
        <begin position="30"/>
        <end position="31"/>
    </location>
</feature>
<feature type="non-consecutive residues" evidence="2">
    <location>
        <begin position="45"/>
        <end position="46"/>
    </location>
</feature>
<feature type="non-consecutive residues" evidence="2">
    <location>
        <begin position="59"/>
        <end position="60"/>
    </location>
</feature>
<feature type="non-consecutive residues" evidence="2">
    <location>
        <begin position="79"/>
        <end position="80"/>
    </location>
</feature>
<feature type="non-terminal residue" evidence="2">
    <location>
        <position position="1"/>
    </location>
</feature>
<feature type="non-terminal residue" evidence="2">
    <location>
        <position position="95"/>
    </location>
</feature>
<protein>
    <recommendedName>
        <fullName>Nodulin</fullName>
    </recommendedName>
</protein>
<keyword id="KW-0903">Direct protein sequencing</keyword>
<name>NODX_STRHE</name>
<sequence>QLYDIGARAAFPSQPSPYGMTSQGQTNLPQQVQPQLVSETISSIKCIYIGQNDLTGYAGVIDGQTAGASACSDPQNYVKALAYGILGGTNLNSYK</sequence>
<evidence type="ECO:0000269" key="1">
    <source ref="1"/>
</evidence>
<evidence type="ECO:0000303" key="2">
    <source ref="1"/>
</evidence>
<evidence type="ECO:0000305" key="3"/>